<sequence length="1396" mass="154863">MVDITDFFKKTNKADSSQAFNQVRINIASPEQIRSWSYGEVTKPETINYRTFKPEKDGLFCAKIFGPVKDYECLCGKYKRMKYRGIVCEKCGVEVTTSKVRRERMGHIELASPIAHIWFVRSLPSRISILLDMNLKDLERVIYFEAYIVMDPGLSPLHKGDLLTEEMLQQAQNEYGEDNFIVGIGAEAIRTLLAELDLKSLRNALQEEVNNVINSDFKRKKILRRLKLIEDFIGSGNKPEWMIVTVLPIIPPELRPLVMLDAGRFASSDLNELYRRLINRNNRLKYLKKEEDGVPGIVLRNEQRMVQLSADTLFDNGKRGKAVKNSNKRPFKSLSDMLKGKQGRFRQNLLGKRVDYSGRSVIVVGPELKLHQCGLPKQMALELFKPFVYAELERCGIATTIKAAKRIVELGTPDVWNALAKVIKHHPVLLNRAPTLHCLSIQAFEPVLIEDKAIQLHPLVCTAFNADFDGDQMAVHVPLSTEAQLEARVLMMSTNNILSPANGRPIIVPDKDIVLGLYYLTLSIDGEIGEGRLFGSMAEIHHALFNKVVSLHSKIKFRKHIINADGDKVMALVNTTPGRLMLGELLPDGDNISFDVVNKVMTKKGISAIVDMVYRYYGQKATVVFADKLMKLGFKYACISGISFGMDDMIVPETKSKHVNDTLLEVQEFERQYSEGLITSGEKYNKVIDAWSRYTDRVANDMMKGIAAGDQTSVGLTNQERLNSIFMMADSEARSSVTQIKQLIGSKGLIAKASGEIIDRPILSNFCEGLTVFECFIGIPGTRKGLADTAVKTKVSGHLSRKLSESAHGYFVKREDCGTTNGLIITAVVEGGVIVVTLAEQVLGRVAVSNVYCPITKVLILQQGEMIDEYKVELINTAGINSIKVRSVLTCELQEGVCAKCYGRDLSTGKLVAIGTAVGIVAAQSIGEPGTQLTMRTFHIGGAATRGVEASSFEAIVDGRVKIINPNFVVNSNNKSVIMSRSCEVILADNVGQEITRYKAQYGSILLVTDGQEVTKGTSLVAWDPYAMPIVTEKSGYVMFKDMIDGVSVKDIIDESTGIVNRVIIEPKQGRGEVVLRPRICLLDQNKQPLTLSNGLEAEYFLPVNSILSVEEGANVSAGDILARIPREFAGTKDITGGLPRVIELFEARKPKNHAVIAEIDGCVKFGKDYKSKRRLILQPNDECQEPIEYILPKGRHVTVNEGDVVKKGDMLIEGSPVLQDILKVMGVEALGLYIINEIQAVYRLQGVKIDNKHIEVIITRMLQKVEITDSGDSNFVIEEKVNKREVINTNKKLKVKGLREAQYRPILQGITKASLQTQSFISAASFQETTRVLTEAAIAGKVDKLEGLKENVIVGQTIPAGTGFYINEIKKIARQRDKEIIAAKDAELQENNTEA</sequence>
<name>RPOC_ORITB</name>
<organism>
    <name type="scientific">Orientia tsutsugamushi (strain Boryong)</name>
    <name type="common">Rickettsia tsutsugamushi</name>
    <dbReference type="NCBI Taxonomy" id="357244"/>
    <lineage>
        <taxon>Bacteria</taxon>
        <taxon>Pseudomonadati</taxon>
        <taxon>Pseudomonadota</taxon>
        <taxon>Alphaproteobacteria</taxon>
        <taxon>Rickettsiales</taxon>
        <taxon>Rickettsiaceae</taxon>
        <taxon>Rickettsieae</taxon>
        <taxon>Orientia</taxon>
    </lineage>
</organism>
<keyword id="KW-0240">DNA-directed RNA polymerase</keyword>
<keyword id="KW-0460">Magnesium</keyword>
<keyword id="KW-0479">Metal-binding</keyword>
<keyword id="KW-0548">Nucleotidyltransferase</keyword>
<keyword id="KW-1185">Reference proteome</keyword>
<keyword id="KW-0804">Transcription</keyword>
<keyword id="KW-0808">Transferase</keyword>
<keyword id="KW-0862">Zinc</keyword>
<protein>
    <recommendedName>
        <fullName evidence="1">DNA-directed RNA polymerase subunit beta'</fullName>
        <shortName evidence="1">RNAP subunit beta'</shortName>
        <ecNumber evidence="1">2.7.7.6</ecNumber>
    </recommendedName>
    <alternativeName>
        <fullName evidence="1">RNA polymerase subunit beta'</fullName>
    </alternativeName>
    <alternativeName>
        <fullName evidence="1">Transcriptase subunit beta'</fullName>
    </alternativeName>
</protein>
<reference key="1">
    <citation type="journal article" date="2007" name="Proc. Natl. Acad. Sci. U.S.A.">
        <title>The Orientia tsutsugamushi genome reveals massive proliferation of conjugative type IV secretion system and host-cell interaction genes.</title>
        <authorList>
            <person name="Cho N.-H."/>
            <person name="Kim H.-R."/>
            <person name="Lee J.-H."/>
            <person name="Kim S.-Y."/>
            <person name="Kim J."/>
            <person name="Cha S."/>
            <person name="Kim S.-Y."/>
            <person name="Darby A.C."/>
            <person name="Fuxelius H.-H."/>
            <person name="Yin J."/>
            <person name="Kim J.H."/>
            <person name="Kim J."/>
            <person name="Lee S.J."/>
            <person name="Koh Y.-S."/>
            <person name="Jang W.-J."/>
            <person name="Park K.-H."/>
            <person name="Andersson S.G.E."/>
            <person name="Choi M.-S."/>
            <person name="Kim I.-S."/>
        </authorList>
    </citation>
    <scope>NUCLEOTIDE SEQUENCE [LARGE SCALE GENOMIC DNA]</scope>
    <source>
        <strain>Boryong</strain>
    </source>
</reference>
<accession>A5CC92</accession>
<proteinExistence type="inferred from homology"/>
<evidence type="ECO:0000255" key="1">
    <source>
        <dbReference type="HAMAP-Rule" id="MF_01322"/>
    </source>
</evidence>
<comment type="function">
    <text evidence="1">DNA-dependent RNA polymerase catalyzes the transcription of DNA into RNA using the four ribonucleoside triphosphates as substrates.</text>
</comment>
<comment type="catalytic activity">
    <reaction evidence="1">
        <text>RNA(n) + a ribonucleoside 5'-triphosphate = RNA(n+1) + diphosphate</text>
        <dbReference type="Rhea" id="RHEA:21248"/>
        <dbReference type="Rhea" id="RHEA-COMP:14527"/>
        <dbReference type="Rhea" id="RHEA-COMP:17342"/>
        <dbReference type="ChEBI" id="CHEBI:33019"/>
        <dbReference type="ChEBI" id="CHEBI:61557"/>
        <dbReference type="ChEBI" id="CHEBI:140395"/>
        <dbReference type="EC" id="2.7.7.6"/>
    </reaction>
</comment>
<comment type="cofactor">
    <cofactor evidence="1">
        <name>Mg(2+)</name>
        <dbReference type="ChEBI" id="CHEBI:18420"/>
    </cofactor>
    <text evidence="1">Binds 1 Mg(2+) ion per subunit.</text>
</comment>
<comment type="cofactor">
    <cofactor evidence="1">
        <name>Zn(2+)</name>
        <dbReference type="ChEBI" id="CHEBI:29105"/>
    </cofactor>
    <text evidence="1">Binds 2 Zn(2+) ions per subunit.</text>
</comment>
<comment type="subunit">
    <text evidence="1">The RNAP catalytic core consists of 2 alpha, 1 beta, 1 beta' and 1 omega subunit. When a sigma factor is associated with the core the holoenzyme is formed, which can initiate transcription.</text>
</comment>
<comment type="similarity">
    <text evidence="1">Belongs to the RNA polymerase beta' chain family.</text>
</comment>
<gene>
    <name evidence="1" type="primary">rpoC</name>
    <name type="ordered locus">OTBS_0207</name>
</gene>
<dbReference type="EC" id="2.7.7.6" evidence="1"/>
<dbReference type="EMBL" id="AM494475">
    <property type="protein sequence ID" value="CAM79273.1"/>
    <property type="molecule type" value="Genomic_DNA"/>
</dbReference>
<dbReference type="RefSeq" id="WP_011944331.1">
    <property type="nucleotide sequence ID" value="NC_009488.1"/>
</dbReference>
<dbReference type="SMR" id="A5CC92"/>
<dbReference type="KEGG" id="ots:OTBS_0207"/>
<dbReference type="eggNOG" id="COG0086">
    <property type="taxonomic scope" value="Bacteria"/>
</dbReference>
<dbReference type="HOGENOM" id="CLU_000524_3_1_5"/>
<dbReference type="Proteomes" id="UP000001565">
    <property type="component" value="Chromosome"/>
</dbReference>
<dbReference type="GO" id="GO:0000428">
    <property type="term" value="C:DNA-directed RNA polymerase complex"/>
    <property type="evidence" value="ECO:0007669"/>
    <property type="project" value="UniProtKB-KW"/>
</dbReference>
<dbReference type="GO" id="GO:0003677">
    <property type="term" value="F:DNA binding"/>
    <property type="evidence" value="ECO:0007669"/>
    <property type="project" value="UniProtKB-UniRule"/>
</dbReference>
<dbReference type="GO" id="GO:0003899">
    <property type="term" value="F:DNA-directed RNA polymerase activity"/>
    <property type="evidence" value="ECO:0007669"/>
    <property type="project" value="UniProtKB-UniRule"/>
</dbReference>
<dbReference type="GO" id="GO:0000287">
    <property type="term" value="F:magnesium ion binding"/>
    <property type="evidence" value="ECO:0007669"/>
    <property type="project" value="UniProtKB-UniRule"/>
</dbReference>
<dbReference type="GO" id="GO:0008270">
    <property type="term" value="F:zinc ion binding"/>
    <property type="evidence" value="ECO:0007669"/>
    <property type="project" value="UniProtKB-UniRule"/>
</dbReference>
<dbReference type="GO" id="GO:0006351">
    <property type="term" value="P:DNA-templated transcription"/>
    <property type="evidence" value="ECO:0007669"/>
    <property type="project" value="UniProtKB-UniRule"/>
</dbReference>
<dbReference type="CDD" id="cd02655">
    <property type="entry name" value="RNAP_beta'_C"/>
    <property type="match status" value="1"/>
</dbReference>
<dbReference type="CDD" id="cd01609">
    <property type="entry name" value="RNAP_beta'_N"/>
    <property type="match status" value="1"/>
</dbReference>
<dbReference type="FunFam" id="1.10.150.390:FF:000002">
    <property type="entry name" value="DNA-directed RNA polymerase subunit beta"/>
    <property type="match status" value="1"/>
</dbReference>
<dbReference type="Gene3D" id="1.10.132.30">
    <property type="match status" value="1"/>
</dbReference>
<dbReference type="Gene3D" id="1.10.150.390">
    <property type="match status" value="1"/>
</dbReference>
<dbReference type="Gene3D" id="1.10.1790.20">
    <property type="match status" value="1"/>
</dbReference>
<dbReference type="Gene3D" id="1.10.40.90">
    <property type="match status" value="1"/>
</dbReference>
<dbReference type="Gene3D" id="2.40.40.20">
    <property type="match status" value="1"/>
</dbReference>
<dbReference type="Gene3D" id="2.40.50.100">
    <property type="match status" value="3"/>
</dbReference>
<dbReference type="Gene3D" id="4.10.860.120">
    <property type="entry name" value="RNA polymerase II, clamp domain"/>
    <property type="match status" value="1"/>
</dbReference>
<dbReference type="Gene3D" id="1.10.274.100">
    <property type="entry name" value="RNA polymerase Rpb1, domain 3"/>
    <property type="match status" value="1"/>
</dbReference>
<dbReference type="HAMAP" id="MF_01322">
    <property type="entry name" value="RNApol_bact_RpoC"/>
    <property type="match status" value="1"/>
</dbReference>
<dbReference type="InterPro" id="IPR045867">
    <property type="entry name" value="DNA-dir_RpoC_beta_prime"/>
</dbReference>
<dbReference type="InterPro" id="IPR012754">
    <property type="entry name" value="DNA-dir_RpoC_beta_prime_bact"/>
</dbReference>
<dbReference type="InterPro" id="IPR000722">
    <property type="entry name" value="RNA_pol_asu"/>
</dbReference>
<dbReference type="InterPro" id="IPR006592">
    <property type="entry name" value="RNA_pol_N"/>
</dbReference>
<dbReference type="InterPro" id="IPR007080">
    <property type="entry name" value="RNA_pol_Rpb1_1"/>
</dbReference>
<dbReference type="InterPro" id="IPR007066">
    <property type="entry name" value="RNA_pol_Rpb1_3"/>
</dbReference>
<dbReference type="InterPro" id="IPR042102">
    <property type="entry name" value="RNA_pol_Rpb1_3_sf"/>
</dbReference>
<dbReference type="InterPro" id="IPR007083">
    <property type="entry name" value="RNA_pol_Rpb1_4"/>
</dbReference>
<dbReference type="InterPro" id="IPR007081">
    <property type="entry name" value="RNA_pol_Rpb1_5"/>
</dbReference>
<dbReference type="InterPro" id="IPR044893">
    <property type="entry name" value="RNA_pol_Rpb1_clamp_domain"/>
</dbReference>
<dbReference type="InterPro" id="IPR038120">
    <property type="entry name" value="Rpb1_funnel_sf"/>
</dbReference>
<dbReference type="NCBIfam" id="TIGR02386">
    <property type="entry name" value="rpoC_TIGR"/>
    <property type="match status" value="1"/>
</dbReference>
<dbReference type="PANTHER" id="PTHR19376">
    <property type="entry name" value="DNA-DIRECTED RNA POLYMERASE"/>
    <property type="match status" value="1"/>
</dbReference>
<dbReference type="PANTHER" id="PTHR19376:SF54">
    <property type="entry name" value="DNA-DIRECTED RNA POLYMERASE SUBUNIT BETA"/>
    <property type="match status" value="1"/>
</dbReference>
<dbReference type="Pfam" id="PF04997">
    <property type="entry name" value="RNA_pol_Rpb1_1"/>
    <property type="match status" value="1"/>
</dbReference>
<dbReference type="Pfam" id="PF00623">
    <property type="entry name" value="RNA_pol_Rpb1_2"/>
    <property type="match status" value="2"/>
</dbReference>
<dbReference type="Pfam" id="PF04983">
    <property type="entry name" value="RNA_pol_Rpb1_3"/>
    <property type="match status" value="1"/>
</dbReference>
<dbReference type="Pfam" id="PF05000">
    <property type="entry name" value="RNA_pol_Rpb1_4"/>
    <property type="match status" value="1"/>
</dbReference>
<dbReference type="Pfam" id="PF04998">
    <property type="entry name" value="RNA_pol_Rpb1_5"/>
    <property type="match status" value="1"/>
</dbReference>
<dbReference type="SMART" id="SM00663">
    <property type="entry name" value="RPOLA_N"/>
    <property type="match status" value="1"/>
</dbReference>
<dbReference type="SUPFAM" id="SSF64484">
    <property type="entry name" value="beta and beta-prime subunits of DNA dependent RNA-polymerase"/>
    <property type="match status" value="1"/>
</dbReference>
<feature type="chain" id="PRO_0000308870" description="DNA-directed RNA polymerase subunit beta'">
    <location>
        <begin position="1"/>
        <end position="1396"/>
    </location>
</feature>
<feature type="binding site" evidence="1">
    <location>
        <position position="73"/>
    </location>
    <ligand>
        <name>Zn(2+)</name>
        <dbReference type="ChEBI" id="CHEBI:29105"/>
        <label>1</label>
    </ligand>
</feature>
<feature type="binding site" evidence="1">
    <location>
        <position position="75"/>
    </location>
    <ligand>
        <name>Zn(2+)</name>
        <dbReference type="ChEBI" id="CHEBI:29105"/>
        <label>1</label>
    </ligand>
</feature>
<feature type="binding site" evidence="1">
    <location>
        <position position="88"/>
    </location>
    <ligand>
        <name>Zn(2+)</name>
        <dbReference type="ChEBI" id="CHEBI:29105"/>
        <label>1</label>
    </ligand>
</feature>
<feature type="binding site" evidence="1">
    <location>
        <position position="91"/>
    </location>
    <ligand>
        <name>Zn(2+)</name>
        <dbReference type="ChEBI" id="CHEBI:29105"/>
        <label>1</label>
    </ligand>
</feature>
<feature type="binding site" evidence="1">
    <location>
        <position position="467"/>
    </location>
    <ligand>
        <name>Mg(2+)</name>
        <dbReference type="ChEBI" id="CHEBI:18420"/>
    </ligand>
</feature>
<feature type="binding site" evidence="1">
    <location>
        <position position="469"/>
    </location>
    <ligand>
        <name>Mg(2+)</name>
        <dbReference type="ChEBI" id="CHEBI:18420"/>
    </ligand>
</feature>
<feature type="binding site" evidence="1">
    <location>
        <position position="471"/>
    </location>
    <ligand>
        <name>Mg(2+)</name>
        <dbReference type="ChEBI" id="CHEBI:18420"/>
    </ligand>
</feature>
<feature type="binding site" evidence="1">
    <location>
        <position position="817"/>
    </location>
    <ligand>
        <name>Zn(2+)</name>
        <dbReference type="ChEBI" id="CHEBI:29105"/>
        <label>2</label>
    </ligand>
</feature>
<feature type="binding site" evidence="1">
    <location>
        <position position="891"/>
    </location>
    <ligand>
        <name>Zn(2+)</name>
        <dbReference type="ChEBI" id="CHEBI:29105"/>
        <label>2</label>
    </ligand>
</feature>
<feature type="binding site" evidence="1">
    <location>
        <position position="898"/>
    </location>
    <ligand>
        <name>Zn(2+)</name>
        <dbReference type="ChEBI" id="CHEBI:29105"/>
        <label>2</label>
    </ligand>
</feature>
<feature type="binding site" evidence="1">
    <location>
        <position position="901"/>
    </location>
    <ligand>
        <name>Zn(2+)</name>
        <dbReference type="ChEBI" id="CHEBI:29105"/>
        <label>2</label>
    </ligand>
</feature>